<dbReference type="EMBL" id="CH408055">
    <property type="protein sequence ID" value="EDV09544.1"/>
    <property type="molecule type" value="Genomic_DNA"/>
</dbReference>
<dbReference type="SMR" id="B3LTR3"/>
<dbReference type="HOGENOM" id="CLU_118207_0_0_1"/>
<dbReference type="OrthoDB" id="15655at4893"/>
<dbReference type="Proteomes" id="UP000008335">
    <property type="component" value="Unassembled WGS sequence"/>
</dbReference>
<dbReference type="GO" id="GO:0005737">
    <property type="term" value="C:cytoplasm"/>
    <property type="evidence" value="ECO:0007669"/>
    <property type="project" value="UniProtKB-SubCell"/>
</dbReference>
<dbReference type="GO" id="GO:0006112">
    <property type="term" value="P:energy reserve metabolic process"/>
    <property type="evidence" value="ECO:0007669"/>
    <property type="project" value="InterPro"/>
</dbReference>
<dbReference type="FunFam" id="3.40.1000.40:FF:000001">
    <property type="entry name" value="Respiratory growth induced protein 2"/>
    <property type="match status" value="1"/>
</dbReference>
<dbReference type="Gene3D" id="3.40.1000.40">
    <property type="entry name" value="Respiratory growth induced protein 1"/>
    <property type="match status" value="1"/>
</dbReference>
<dbReference type="InterPro" id="IPR022554">
    <property type="entry name" value="RGI1"/>
</dbReference>
<dbReference type="InterPro" id="IPR038235">
    <property type="entry name" value="RGI1_sf"/>
</dbReference>
<dbReference type="Pfam" id="PF10843">
    <property type="entry name" value="RGI1"/>
    <property type="match status" value="1"/>
</dbReference>
<keyword id="KW-0963">Cytoplasm</keyword>
<protein>
    <recommendedName>
        <fullName>Respiratory growth induced protein 2</fullName>
    </recommendedName>
</protein>
<sequence length="164" mass="19257">MTKKDKKAKGPKMSTITTKSGESLKVFEDLHDFETYLKGETEDQEFDHVHCQLKYYPPFVLHDAHDDPEKIKETANSHSKKFVRHLHQHVEKHLLKDIKTAINKPELKFHDKKKQESFDRIVWNYGEETELNAKKFKVSVEVVCKHDGAMVDVDYRTEPLQPLI</sequence>
<evidence type="ECO:0000250" key="1"/>
<evidence type="ECO:0000305" key="2"/>
<name>RGI2_YEAS1</name>
<gene>
    <name type="primary">RGI2</name>
    <name type="ORF">SCRG_05235</name>
</gene>
<feature type="chain" id="PRO_0000402299" description="Respiratory growth induced protein 2">
    <location>
        <begin position="1"/>
        <end position="164"/>
    </location>
</feature>
<organism>
    <name type="scientific">Saccharomyces cerevisiae (strain RM11-1a)</name>
    <name type="common">Baker's yeast</name>
    <dbReference type="NCBI Taxonomy" id="285006"/>
    <lineage>
        <taxon>Eukaryota</taxon>
        <taxon>Fungi</taxon>
        <taxon>Dikarya</taxon>
        <taxon>Ascomycota</taxon>
        <taxon>Saccharomycotina</taxon>
        <taxon>Saccharomycetes</taxon>
        <taxon>Saccharomycetales</taxon>
        <taxon>Saccharomycetaceae</taxon>
        <taxon>Saccharomyces</taxon>
    </lineage>
</organism>
<accession>B3LTR3</accession>
<comment type="function">
    <text evidence="1">Involved in the control of energetic metabolism and significantly contribute to cell fitness, especially under respiratory growth conditions.</text>
</comment>
<comment type="subcellular location">
    <subcellularLocation>
        <location evidence="1">Cytoplasm</location>
    </subcellularLocation>
</comment>
<comment type="similarity">
    <text evidence="2">Belongs to the RGI1 family.</text>
</comment>
<reference key="1">
    <citation type="submission" date="2005-03" db="EMBL/GenBank/DDBJ databases">
        <title>Annotation of the Saccharomyces cerevisiae RM11-1a genome.</title>
        <authorList>
            <consortium name="The Broad Institute Genome Sequencing Platform"/>
            <person name="Birren B.W."/>
            <person name="Lander E.S."/>
            <person name="Galagan J.E."/>
            <person name="Nusbaum C."/>
            <person name="Devon K."/>
            <person name="Cuomo C."/>
            <person name="Jaffe D.B."/>
            <person name="Butler J."/>
            <person name="Alvarez P."/>
            <person name="Gnerre S."/>
            <person name="Grabherr M."/>
            <person name="Kleber M."/>
            <person name="Mauceli E.W."/>
            <person name="Brockman W."/>
            <person name="MacCallum I.A."/>
            <person name="Rounsley S."/>
            <person name="Young S.K."/>
            <person name="LaButti K."/>
            <person name="Pushparaj V."/>
            <person name="DeCaprio D."/>
            <person name="Crawford M."/>
            <person name="Koehrsen M."/>
            <person name="Engels R."/>
            <person name="Montgomery P."/>
            <person name="Pearson M."/>
            <person name="Howarth C."/>
            <person name="Larson L."/>
            <person name="Luoma S."/>
            <person name="White J."/>
            <person name="O'Leary S."/>
            <person name="Kodira C.D."/>
            <person name="Zeng Q."/>
            <person name="Yandava C."/>
            <person name="Alvarado L."/>
            <person name="Pratt S."/>
            <person name="Kruglyak L."/>
        </authorList>
    </citation>
    <scope>NUCLEOTIDE SEQUENCE [LARGE SCALE GENOMIC DNA]</scope>
    <source>
        <strain>RM11-1a</strain>
    </source>
</reference>
<proteinExistence type="inferred from homology"/>